<gene>
    <name type="primary">ngoPIIR</name>
    <name type="synonym">dcrB</name>
</gene>
<proteinExistence type="inferred from homology"/>
<reference key="1">
    <citation type="journal article" date="1989" name="Mol. Gen. Genet.">
        <title>Nucleotide sequence and genetic organization of the NgoPII restriction-modification system of Neisseria gonorrhoeae.</title>
        <authorList>
            <person name="Sullivan K.M."/>
            <person name="Saunders J.R."/>
        </authorList>
    </citation>
    <scope>NUCLEOTIDE SEQUENCE [GENOMIC DNA]</scope>
    <source>
        <strain>P9</strain>
    </source>
</reference>
<reference key="2">
    <citation type="journal article" date="2003" name="Nucleic Acids Res.">
        <title>A nomenclature for restriction enzymes, DNA methyltransferases, homing endonucleases and their genes.</title>
        <authorList>
            <person name="Roberts R.J."/>
            <person name="Belfort M."/>
            <person name="Bestor T."/>
            <person name="Bhagwat A.S."/>
            <person name="Bickle T.A."/>
            <person name="Bitinaite J."/>
            <person name="Blumenthal R.M."/>
            <person name="Degtyarev S.K."/>
            <person name="Dryden D.T."/>
            <person name="Dybvig K."/>
            <person name="Firman K."/>
            <person name="Gromova E.S."/>
            <person name="Gumport R.I."/>
            <person name="Halford S.E."/>
            <person name="Hattman S."/>
            <person name="Heitman J."/>
            <person name="Hornby D.P."/>
            <person name="Janulaitis A."/>
            <person name="Jeltsch A."/>
            <person name="Josephsen J."/>
            <person name="Kiss A."/>
            <person name="Klaenhammer T.R."/>
            <person name="Kobayashi I."/>
            <person name="Kong H."/>
            <person name="Krueger D.H."/>
            <person name="Lacks S."/>
            <person name="Marinus M.G."/>
            <person name="Miyahara M."/>
            <person name="Morgan R.D."/>
            <person name="Murray N.E."/>
            <person name="Nagaraja V."/>
            <person name="Piekarowicz A."/>
            <person name="Pingoud A."/>
            <person name="Raleigh E."/>
            <person name="Rao D.N."/>
            <person name="Reich N."/>
            <person name="Repin V.E."/>
            <person name="Selker E.U."/>
            <person name="Shaw P.C."/>
            <person name="Stein D.C."/>
            <person name="Stoddard B.L."/>
            <person name="Szybalski W."/>
            <person name="Trautner T.A."/>
            <person name="Van Etten J.L."/>
            <person name="Vitor J.M."/>
            <person name="Wilson G.G."/>
            <person name="Xu S.Y."/>
        </authorList>
    </citation>
    <scope>NOMENCLATURE</scope>
    <scope>SUBTYPE</scope>
</reference>
<dbReference type="EC" id="3.1.21.4"/>
<dbReference type="EMBL" id="X52661">
    <property type="protein sequence ID" value="CAA36887.1"/>
    <property type="molecule type" value="Genomic_DNA"/>
</dbReference>
<dbReference type="PIR" id="S04419">
    <property type="entry name" value="S04419"/>
</dbReference>
<dbReference type="RefSeq" id="WP_003690022.1">
    <property type="nucleotide sequence ID" value="NZ_VCDH01000007.1"/>
</dbReference>
<dbReference type="REBASE" id="1331">
    <property type="entry name" value="NgoPII"/>
</dbReference>
<dbReference type="PRO" id="PR:P24617"/>
<dbReference type="GO" id="GO:0003677">
    <property type="term" value="F:DNA binding"/>
    <property type="evidence" value="ECO:0007669"/>
    <property type="project" value="InterPro"/>
</dbReference>
<dbReference type="GO" id="GO:0009036">
    <property type="term" value="F:type II site-specific deoxyribonuclease activity"/>
    <property type="evidence" value="ECO:0007669"/>
    <property type="project" value="UniProtKB-EC"/>
</dbReference>
<dbReference type="GO" id="GO:0009307">
    <property type="term" value="P:DNA restriction-modification system"/>
    <property type="evidence" value="ECO:0007669"/>
    <property type="project" value="UniProtKB-KW"/>
</dbReference>
<dbReference type="InterPro" id="IPR019046">
    <property type="entry name" value="Restrct_endonuc_II_NgoPII"/>
</dbReference>
<dbReference type="Pfam" id="PF09521">
    <property type="entry name" value="RE_NgoPII"/>
    <property type="match status" value="1"/>
</dbReference>
<evidence type="ECO:0000303" key="1">
    <source>
    </source>
</evidence>
<evidence type="ECO:0000303" key="2">
    <source>
    </source>
</evidence>
<evidence type="ECO:0000305" key="3"/>
<name>T2P2_NEIGO</name>
<feature type="chain" id="PRO_0000077348" description="Type II restriction enzyme NgoPII">
    <location>
        <begin position="1"/>
        <end position="278"/>
    </location>
</feature>
<comment type="function">
    <text evidence="1">A P subtype restriction enzyme that recognizes the double-stranded sequence 5'-GGCC-3' and cleaves after G-2.</text>
</comment>
<comment type="catalytic activity">
    <reaction>
        <text>Endonucleolytic cleavage of DNA to give specific double-stranded fragments with terminal 5'-phosphates.</text>
        <dbReference type="EC" id="3.1.21.4"/>
    </reaction>
</comment>
<comment type="similarity">
    <text evidence="3">Belongs to the NgoPII type II restriction endonuclease family.</text>
</comment>
<keyword id="KW-0255">Endonuclease</keyword>
<keyword id="KW-0378">Hydrolase</keyword>
<keyword id="KW-0540">Nuclease</keyword>
<keyword id="KW-0680">Restriction system</keyword>
<sequence>MNIIDAIINLANNPVVGVESHSQSNNRANQAGDALEEYVKDLFSGSFNLNETQRIARHAKVFSYLGNNSNPPDAMLRNGDAIEVKKIESKDSALALNSSHPKSKLSVDDSMLTKACKDAEKWEEKDIIYIVGVVDKKKNLKHLAMVYGIDYCADAECYLKIKNQIKEGIGNIGGIQFAETKELGRVNRIDPLNITYLRVRGMWGIENPWFVFNYIYQRNMEKSFNFMAIINEDKWNSFNNTDKLLAIQDSKLAISDIKIKNPNNPARLRNAKLITYHL</sequence>
<accession>P24617</accession>
<protein>
    <recommendedName>
        <fullName evidence="1">Type II restriction enzyme NgoPII</fullName>
        <shortName evidence="2">R.NgoPII</shortName>
        <ecNumber>3.1.21.4</ecNumber>
    </recommendedName>
    <alternativeName>
        <fullName>Endonuclease NgoPII</fullName>
    </alternativeName>
    <alternativeName>
        <fullName>Type-2 restriction enzyme NgoPII</fullName>
    </alternativeName>
</protein>
<organism>
    <name type="scientific">Neisseria gonorrhoeae</name>
    <dbReference type="NCBI Taxonomy" id="485"/>
    <lineage>
        <taxon>Bacteria</taxon>
        <taxon>Pseudomonadati</taxon>
        <taxon>Pseudomonadota</taxon>
        <taxon>Betaproteobacteria</taxon>
        <taxon>Neisseriales</taxon>
        <taxon>Neisseriaceae</taxon>
        <taxon>Neisseria</taxon>
    </lineage>
</organism>